<accession>Q6CDG5</accession>
<proteinExistence type="inferred from homology"/>
<feature type="chain" id="PRO_0000176052" description="DASH complex subunit DAD4">
    <location>
        <begin position="1"/>
        <end position="76"/>
    </location>
</feature>
<gene>
    <name type="primary">DAD4</name>
    <name type="ordered locus">YALI0C00715g</name>
</gene>
<protein>
    <recommendedName>
        <fullName>DASH complex subunit DAD4</fullName>
    </recommendedName>
    <alternativeName>
        <fullName>Outer kinetochore protein DAD4</fullName>
    </alternativeName>
</protein>
<name>DAD4_YARLI</name>
<organism>
    <name type="scientific">Yarrowia lipolytica (strain CLIB 122 / E 150)</name>
    <name type="common">Yeast</name>
    <name type="synonym">Candida lipolytica</name>
    <dbReference type="NCBI Taxonomy" id="284591"/>
    <lineage>
        <taxon>Eukaryota</taxon>
        <taxon>Fungi</taxon>
        <taxon>Dikarya</taxon>
        <taxon>Ascomycota</taxon>
        <taxon>Saccharomycotina</taxon>
        <taxon>Dipodascomycetes</taxon>
        <taxon>Dipodascales</taxon>
        <taxon>Dipodascales incertae sedis</taxon>
        <taxon>Yarrowia</taxon>
    </lineage>
</organism>
<evidence type="ECO:0000250" key="1">
    <source>
        <dbReference type="UniProtKB" id="P69851"/>
    </source>
</evidence>
<evidence type="ECO:0000250" key="2">
    <source>
        <dbReference type="UniProtKB" id="Q50HP4"/>
    </source>
</evidence>
<evidence type="ECO:0000305" key="3"/>
<comment type="function">
    <text evidence="1">Component of the DASH complex that connects microtubules with kinetochores and couples microtubule depolymerisation to chromosome movement; it is involved in retrieving kinetochores to the spindle poles before their re-orientation on the spindle in early mitosis and allows microtubule depolymerization to pull chromosomes apart and resist detachment during anaphase. Kinetochores, consisting of a centromere-associated inner segment and a microtubule-contacting outer segment, play a crucial role in chromosome segregation by mediating the physical connection between centromeric DNA and microtubules. Kinetochores also serve as an input point for the spindle assembly checkpoint, which delays anaphase until all chromosomes have bioriented on the mitotic spindle.</text>
</comment>
<comment type="subunit">
    <text evidence="1 2">Component of the DASH complex consisting of ASK1, DAD1, DAD2, DAD3, DAD4, DAM1, DUO1, HSK3, SPC19 and SPC34, with a stoichiometry of one copy of each subunit per complex. Multiple DASH complexes oligomerize to form a ring that encircles spindle microtubules and organizes the rod-like NDC80 complexes of the outer kinetochore. DASH complex oligomerization strengthens microtubule attachments (By similarity). On cytoplasmic microtubules, DASH complexes appear to form patches instead of rings (By similarity).</text>
</comment>
<comment type="subcellular location">
    <subcellularLocation>
        <location evidence="1">Nucleus</location>
    </subcellularLocation>
    <subcellularLocation>
        <location evidence="1">Cytoplasm</location>
        <location evidence="1">Cytoskeleton</location>
        <location evidence="1">Spindle</location>
    </subcellularLocation>
    <subcellularLocation>
        <location evidence="1">Chromosome</location>
        <location evidence="1">Centromere</location>
        <location evidence="1">Kinetochore</location>
    </subcellularLocation>
</comment>
<comment type="similarity">
    <text evidence="3">Belongs to the DASH complex DAD4 family.</text>
</comment>
<dbReference type="EMBL" id="CR382129">
    <property type="protein sequence ID" value="CAG81592.1"/>
    <property type="molecule type" value="Genomic_DNA"/>
</dbReference>
<dbReference type="RefSeq" id="XP_501297.1">
    <property type="nucleotide sequence ID" value="XM_501297.1"/>
</dbReference>
<dbReference type="SMR" id="Q6CDG5"/>
<dbReference type="FunCoup" id="Q6CDG5">
    <property type="interactions" value="16"/>
</dbReference>
<dbReference type="STRING" id="284591.Q6CDG5"/>
<dbReference type="EnsemblFungi" id="CAG81592">
    <property type="protein sequence ID" value="CAG81592"/>
    <property type="gene ID" value="YALI0_C00715g"/>
</dbReference>
<dbReference type="KEGG" id="yli:2909185"/>
<dbReference type="VEuPathDB" id="FungiDB:YALI0_C00715g"/>
<dbReference type="HOGENOM" id="CLU_177920_1_1_1"/>
<dbReference type="InParanoid" id="Q6CDG5"/>
<dbReference type="OrthoDB" id="60473at4891"/>
<dbReference type="Proteomes" id="UP000001300">
    <property type="component" value="Chromosome C"/>
</dbReference>
<dbReference type="GO" id="GO:0005737">
    <property type="term" value="C:cytoplasm"/>
    <property type="evidence" value="ECO:0007669"/>
    <property type="project" value="UniProtKB-KW"/>
</dbReference>
<dbReference type="GO" id="GO:0042729">
    <property type="term" value="C:DASH complex"/>
    <property type="evidence" value="ECO:0000250"/>
    <property type="project" value="UniProtKB"/>
</dbReference>
<dbReference type="GO" id="GO:0005874">
    <property type="term" value="C:microtubule"/>
    <property type="evidence" value="ECO:0007669"/>
    <property type="project" value="UniProtKB-KW"/>
</dbReference>
<dbReference type="GO" id="GO:0072686">
    <property type="term" value="C:mitotic spindle"/>
    <property type="evidence" value="ECO:0007669"/>
    <property type="project" value="InterPro"/>
</dbReference>
<dbReference type="GO" id="GO:0008608">
    <property type="term" value="P:attachment of spindle microtubules to kinetochore"/>
    <property type="evidence" value="ECO:0000250"/>
    <property type="project" value="UniProtKB"/>
</dbReference>
<dbReference type="GO" id="GO:0051301">
    <property type="term" value="P:cell division"/>
    <property type="evidence" value="ECO:0007669"/>
    <property type="project" value="UniProtKB-KW"/>
</dbReference>
<dbReference type="GO" id="GO:1990758">
    <property type="term" value="P:mitotic sister chromatid biorientation"/>
    <property type="evidence" value="ECO:0000250"/>
    <property type="project" value="UniProtKB"/>
</dbReference>
<dbReference type="GO" id="GO:1990976">
    <property type="term" value="P:protein transport along microtubule to mitotic spindle pole body"/>
    <property type="evidence" value="ECO:0000250"/>
    <property type="project" value="UniProtKB"/>
</dbReference>
<dbReference type="InterPro" id="IPR013959">
    <property type="entry name" value="DASH_Dad4"/>
</dbReference>
<dbReference type="PANTHER" id="PTHR28222">
    <property type="entry name" value="DASH COMPLEX SUBUNIT DAD4"/>
    <property type="match status" value="1"/>
</dbReference>
<dbReference type="PANTHER" id="PTHR28222:SF1">
    <property type="entry name" value="DASH COMPLEX SUBUNIT DAD4"/>
    <property type="match status" value="1"/>
</dbReference>
<dbReference type="Pfam" id="PF08650">
    <property type="entry name" value="DASH_Dad4"/>
    <property type="match status" value="1"/>
</dbReference>
<sequence>MENPHEKDQSDALARIISGVSKLNSSIARVNEIQEEVYSRNLNLSVVSEIMQNYQASVDYYLRESGAMKEPFKNDD</sequence>
<keyword id="KW-0131">Cell cycle</keyword>
<keyword id="KW-0132">Cell division</keyword>
<keyword id="KW-0137">Centromere</keyword>
<keyword id="KW-0158">Chromosome</keyword>
<keyword id="KW-0159">Chromosome partition</keyword>
<keyword id="KW-0963">Cytoplasm</keyword>
<keyword id="KW-0206">Cytoskeleton</keyword>
<keyword id="KW-0995">Kinetochore</keyword>
<keyword id="KW-0493">Microtubule</keyword>
<keyword id="KW-0498">Mitosis</keyword>
<keyword id="KW-0539">Nucleus</keyword>
<keyword id="KW-1185">Reference proteome</keyword>
<reference key="1">
    <citation type="journal article" date="2004" name="Nature">
        <title>Genome evolution in yeasts.</title>
        <authorList>
            <person name="Dujon B."/>
            <person name="Sherman D."/>
            <person name="Fischer G."/>
            <person name="Durrens P."/>
            <person name="Casaregola S."/>
            <person name="Lafontaine I."/>
            <person name="de Montigny J."/>
            <person name="Marck C."/>
            <person name="Neuveglise C."/>
            <person name="Talla E."/>
            <person name="Goffard N."/>
            <person name="Frangeul L."/>
            <person name="Aigle M."/>
            <person name="Anthouard V."/>
            <person name="Babour A."/>
            <person name="Barbe V."/>
            <person name="Barnay S."/>
            <person name="Blanchin S."/>
            <person name="Beckerich J.-M."/>
            <person name="Beyne E."/>
            <person name="Bleykasten C."/>
            <person name="Boisrame A."/>
            <person name="Boyer J."/>
            <person name="Cattolico L."/>
            <person name="Confanioleri F."/>
            <person name="de Daruvar A."/>
            <person name="Despons L."/>
            <person name="Fabre E."/>
            <person name="Fairhead C."/>
            <person name="Ferry-Dumazet H."/>
            <person name="Groppi A."/>
            <person name="Hantraye F."/>
            <person name="Hennequin C."/>
            <person name="Jauniaux N."/>
            <person name="Joyet P."/>
            <person name="Kachouri R."/>
            <person name="Kerrest A."/>
            <person name="Koszul R."/>
            <person name="Lemaire M."/>
            <person name="Lesur I."/>
            <person name="Ma L."/>
            <person name="Muller H."/>
            <person name="Nicaud J.-M."/>
            <person name="Nikolski M."/>
            <person name="Oztas S."/>
            <person name="Ozier-Kalogeropoulos O."/>
            <person name="Pellenz S."/>
            <person name="Potier S."/>
            <person name="Richard G.-F."/>
            <person name="Straub M.-L."/>
            <person name="Suleau A."/>
            <person name="Swennen D."/>
            <person name="Tekaia F."/>
            <person name="Wesolowski-Louvel M."/>
            <person name="Westhof E."/>
            <person name="Wirth B."/>
            <person name="Zeniou-Meyer M."/>
            <person name="Zivanovic Y."/>
            <person name="Bolotin-Fukuhara M."/>
            <person name="Thierry A."/>
            <person name="Bouchier C."/>
            <person name="Caudron B."/>
            <person name="Scarpelli C."/>
            <person name="Gaillardin C."/>
            <person name="Weissenbach J."/>
            <person name="Wincker P."/>
            <person name="Souciet J.-L."/>
        </authorList>
    </citation>
    <scope>NUCLEOTIDE SEQUENCE [LARGE SCALE GENOMIC DNA]</scope>
    <source>
        <strain>CLIB 122 / E 150</strain>
    </source>
</reference>